<evidence type="ECO:0000250" key="1"/>
<evidence type="ECO:0000305" key="2"/>
<comment type="function">
    <text evidence="1">Catalyzes the synthesis of activated sulfate.</text>
</comment>
<comment type="catalytic activity">
    <reaction>
        <text>adenosine 5'-phosphosulfate + ATP = 3'-phosphoadenylyl sulfate + ADP + H(+)</text>
        <dbReference type="Rhea" id="RHEA:24152"/>
        <dbReference type="ChEBI" id="CHEBI:15378"/>
        <dbReference type="ChEBI" id="CHEBI:30616"/>
        <dbReference type="ChEBI" id="CHEBI:58243"/>
        <dbReference type="ChEBI" id="CHEBI:58339"/>
        <dbReference type="ChEBI" id="CHEBI:456216"/>
        <dbReference type="EC" id="2.7.1.25"/>
    </reaction>
</comment>
<comment type="pathway">
    <text>Sulfur metabolism; hydrogen sulfide biosynthesis; sulfite from sulfate: step 2/3.</text>
</comment>
<comment type="similarity">
    <text evidence="2">Belongs to the APS kinase family.</text>
</comment>
<proteinExistence type="inferred from homology"/>
<feature type="chain" id="PRO_0000105901" description="Probable adenylyl-sulfate kinase">
    <location>
        <begin position="1"/>
        <end position="202"/>
    </location>
</feature>
<feature type="active site" description="Phosphoserine intermediate" evidence="1">
    <location>
        <position position="110"/>
    </location>
</feature>
<feature type="binding site" evidence="1">
    <location>
        <begin position="36"/>
        <end position="43"/>
    </location>
    <ligand>
        <name>ATP</name>
        <dbReference type="ChEBI" id="CHEBI:30616"/>
    </ligand>
</feature>
<keyword id="KW-0067">ATP-binding</keyword>
<keyword id="KW-0418">Kinase</keyword>
<keyword id="KW-0547">Nucleotide-binding</keyword>
<keyword id="KW-0597">Phosphoprotein</keyword>
<keyword id="KW-1185">Reference proteome</keyword>
<keyword id="KW-0808">Transferase</keyword>
<organism>
    <name type="scientific">Halalkalibacterium halodurans (strain ATCC BAA-125 / DSM 18197 / FERM 7344 / JCM 9153 / C-125)</name>
    <name type="common">Bacillus halodurans</name>
    <dbReference type="NCBI Taxonomy" id="272558"/>
    <lineage>
        <taxon>Bacteria</taxon>
        <taxon>Bacillati</taxon>
        <taxon>Bacillota</taxon>
        <taxon>Bacilli</taxon>
        <taxon>Bacillales</taxon>
        <taxon>Bacillaceae</taxon>
        <taxon>Halalkalibacterium (ex Joshi et al. 2022)</taxon>
    </lineage>
</organism>
<protein>
    <recommendedName>
        <fullName>Probable adenylyl-sulfate kinase</fullName>
        <ecNumber>2.7.1.25</ecNumber>
    </recommendedName>
    <alternativeName>
        <fullName>APS kinase</fullName>
    </alternativeName>
    <alternativeName>
        <fullName>ATP adenosine-5'-phosphosulfate 3'-phosphotransferase</fullName>
    </alternativeName>
    <alternativeName>
        <fullName>Adenosine-5'-phosphosulfate kinase</fullName>
    </alternativeName>
</protein>
<reference key="1">
    <citation type="journal article" date="2000" name="Nucleic Acids Res.">
        <title>Complete genome sequence of the alkaliphilic bacterium Bacillus halodurans and genomic sequence comparison with Bacillus subtilis.</title>
        <authorList>
            <person name="Takami H."/>
            <person name="Nakasone K."/>
            <person name="Takaki Y."/>
            <person name="Maeno G."/>
            <person name="Sasaki R."/>
            <person name="Masui N."/>
            <person name="Fuji F."/>
            <person name="Hirama C."/>
            <person name="Nakamura Y."/>
            <person name="Ogasawara N."/>
            <person name="Kuhara S."/>
            <person name="Horikoshi K."/>
        </authorList>
    </citation>
    <scope>NUCLEOTIDE SEQUENCE [LARGE SCALE GENOMIC DNA]</scope>
    <source>
        <strain>ATCC BAA-125 / DSM 18197 / FERM 7344 / JCM 9153 / C-125</strain>
    </source>
</reference>
<dbReference type="EC" id="2.7.1.25"/>
<dbReference type="EMBL" id="BA000004">
    <property type="protein sequence ID" value="BAB05208.1"/>
    <property type="molecule type" value="Genomic_DNA"/>
</dbReference>
<dbReference type="PIR" id="A83836">
    <property type="entry name" value="A83836"/>
</dbReference>
<dbReference type="RefSeq" id="WP_010897654.1">
    <property type="nucleotide sequence ID" value="NC_002570.2"/>
</dbReference>
<dbReference type="SMR" id="Q9KCT0"/>
<dbReference type="STRING" id="272558.gene:10727387"/>
<dbReference type="KEGG" id="bha:BH1489"/>
<dbReference type="eggNOG" id="COG0529">
    <property type="taxonomic scope" value="Bacteria"/>
</dbReference>
<dbReference type="HOGENOM" id="CLU_046932_1_0_9"/>
<dbReference type="OrthoDB" id="9804504at2"/>
<dbReference type="UniPathway" id="UPA00140">
    <property type="reaction ID" value="UER00205"/>
</dbReference>
<dbReference type="Proteomes" id="UP000001258">
    <property type="component" value="Chromosome"/>
</dbReference>
<dbReference type="GO" id="GO:0004020">
    <property type="term" value="F:adenylylsulfate kinase activity"/>
    <property type="evidence" value="ECO:0007669"/>
    <property type="project" value="UniProtKB-UniRule"/>
</dbReference>
<dbReference type="GO" id="GO:0005524">
    <property type="term" value="F:ATP binding"/>
    <property type="evidence" value="ECO:0007669"/>
    <property type="project" value="UniProtKB-UniRule"/>
</dbReference>
<dbReference type="GO" id="GO:0070814">
    <property type="term" value="P:hydrogen sulfide biosynthetic process"/>
    <property type="evidence" value="ECO:0007669"/>
    <property type="project" value="UniProtKB-UniRule"/>
</dbReference>
<dbReference type="GO" id="GO:0000103">
    <property type="term" value="P:sulfate assimilation"/>
    <property type="evidence" value="ECO:0007669"/>
    <property type="project" value="UniProtKB-UniRule"/>
</dbReference>
<dbReference type="CDD" id="cd02027">
    <property type="entry name" value="APSK"/>
    <property type="match status" value="1"/>
</dbReference>
<dbReference type="FunFam" id="3.40.50.300:FF:000212">
    <property type="entry name" value="Adenylyl-sulfate kinase"/>
    <property type="match status" value="1"/>
</dbReference>
<dbReference type="Gene3D" id="3.40.50.300">
    <property type="entry name" value="P-loop containing nucleotide triphosphate hydrolases"/>
    <property type="match status" value="1"/>
</dbReference>
<dbReference type="HAMAP" id="MF_00065">
    <property type="entry name" value="Adenylyl_sulf_kinase"/>
    <property type="match status" value="1"/>
</dbReference>
<dbReference type="InterPro" id="IPR002891">
    <property type="entry name" value="APS_kinase"/>
</dbReference>
<dbReference type="InterPro" id="IPR027417">
    <property type="entry name" value="P-loop_NTPase"/>
</dbReference>
<dbReference type="NCBIfam" id="TIGR00455">
    <property type="entry name" value="apsK"/>
    <property type="match status" value="1"/>
</dbReference>
<dbReference type="NCBIfam" id="NF003013">
    <property type="entry name" value="PRK03846.1"/>
    <property type="match status" value="1"/>
</dbReference>
<dbReference type="PANTHER" id="PTHR11055">
    <property type="entry name" value="BIFUNCTIONAL 3'-PHOSPHOADENOSINE 5'-PHOSPHOSULFATE SYNTHASE"/>
    <property type="match status" value="1"/>
</dbReference>
<dbReference type="PANTHER" id="PTHR11055:SF1">
    <property type="entry name" value="PAPS SYNTHETASE, ISOFORM D"/>
    <property type="match status" value="1"/>
</dbReference>
<dbReference type="Pfam" id="PF01583">
    <property type="entry name" value="APS_kinase"/>
    <property type="match status" value="1"/>
</dbReference>
<dbReference type="SUPFAM" id="SSF52540">
    <property type="entry name" value="P-loop containing nucleoside triphosphate hydrolases"/>
    <property type="match status" value="1"/>
</dbReference>
<sequence>MGTSNQPHIVWHEASVSKEERQKRNRLKSCVVWFTGLSGSGKSTLANALDRKLFEEGIHSYVLDGDNIRHGLNAGLGFSEEDRKENIRRIGEVAKLFVDAGVVTSTAFISPFREDRDNVRGILDDGEFIEVYVRCPLETCEKRDPKGLYKKARSGDIPEFTGISSPYEEPVNPELIIDTDQLAVEEAVEKIYAYLHAQESGK</sequence>
<accession>Q9KCT0</accession>
<gene>
    <name type="ordered locus">BH1489</name>
</gene>
<name>CYSC1_HALH5</name>